<dbReference type="EMBL" id="AF335466">
    <property type="protein sequence ID" value="AAK28548.1"/>
    <property type="status" value="ALT_INIT"/>
    <property type="molecule type" value="Genomic_DNA"/>
</dbReference>
<dbReference type="EMBL" id="AF414083">
    <property type="protein sequence ID" value="AAL02238.1"/>
    <property type="status" value="ALT_INIT"/>
    <property type="molecule type" value="Genomic_DNA"/>
</dbReference>
<dbReference type="EMBL" id="AF418982">
    <property type="protein sequence ID" value="AAL14973.1"/>
    <property type="status" value="ALT_INIT"/>
    <property type="molecule type" value="Genomic_DNA"/>
</dbReference>
<dbReference type="EMBL" id="BX936398">
    <property type="protein sequence ID" value="CAH21430.1"/>
    <property type="status" value="ALT_INIT"/>
    <property type="molecule type" value="Genomic_DNA"/>
</dbReference>
<dbReference type="RefSeq" id="WP_012413730.1">
    <property type="nucleotide sequence ID" value="NZ_CP009712.1"/>
</dbReference>
<dbReference type="SMR" id="Q9AGD5"/>
<dbReference type="GeneID" id="49785811"/>
<dbReference type="KEGG" id="ypo:BZ17_268"/>
<dbReference type="KEGG" id="yps:YPTB2192"/>
<dbReference type="PATRIC" id="fig|273123.14.peg.284"/>
<dbReference type="Proteomes" id="UP000001011">
    <property type="component" value="Chromosome"/>
</dbReference>
<dbReference type="GO" id="GO:0034707">
    <property type="term" value="C:chloride channel complex"/>
    <property type="evidence" value="ECO:0007669"/>
    <property type="project" value="UniProtKB-KW"/>
</dbReference>
<dbReference type="GO" id="GO:0005886">
    <property type="term" value="C:plasma membrane"/>
    <property type="evidence" value="ECO:0007669"/>
    <property type="project" value="UniProtKB-SubCell"/>
</dbReference>
<dbReference type="GO" id="GO:0005247">
    <property type="term" value="F:voltage-gated chloride channel activity"/>
    <property type="evidence" value="ECO:0007669"/>
    <property type="project" value="UniProtKB-UniRule"/>
</dbReference>
<dbReference type="GO" id="GO:0010447">
    <property type="term" value="P:response to acidic pH"/>
    <property type="evidence" value="ECO:0007669"/>
    <property type="project" value="InterPro"/>
</dbReference>
<dbReference type="CDD" id="cd00400">
    <property type="entry name" value="Voltage_gated_ClC"/>
    <property type="match status" value="1"/>
</dbReference>
<dbReference type="FunFam" id="1.10.3080.10:FF:000010">
    <property type="entry name" value="Voltage-gated ClC-type chloride channel ClcB"/>
    <property type="match status" value="1"/>
</dbReference>
<dbReference type="Gene3D" id="1.10.3080.10">
    <property type="entry name" value="Clc chloride channel"/>
    <property type="match status" value="1"/>
</dbReference>
<dbReference type="HAMAP" id="MF_01203">
    <property type="entry name" value="CLC_ClcB"/>
    <property type="match status" value="1"/>
</dbReference>
<dbReference type="InterPro" id="IPR014743">
    <property type="entry name" value="Cl-channel_core"/>
</dbReference>
<dbReference type="InterPro" id="IPR023790">
    <property type="entry name" value="Cl-channel_volt-gated_ClcB"/>
</dbReference>
<dbReference type="InterPro" id="IPR001807">
    <property type="entry name" value="ClC"/>
</dbReference>
<dbReference type="InterPro" id="IPR050368">
    <property type="entry name" value="ClC-type_chloride_channel"/>
</dbReference>
<dbReference type="NCBIfam" id="NF002437">
    <property type="entry name" value="PRK01610.1"/>
    <property type="match status" value="1"/>
</dbReference>
<dbReference type="PANTHER" id="PTHR43427">
    <property type="entry name" value="CHLORIDE CHANNEL PROTEIN CLC-E"/>
    <property type="match status" value="1"/>
</dbReference>
<dbReference type="PANTHER" id="PTHR43427:SF6">
    <property type="entry name" value="CHLORIDE CHANNEL PROTEIN CLC-E"/>
    <property type="match status" value="1"/>
</dbReference>
<dbReference type="Pfam" id="PF00654">
    <property type="entry name" value="Voltage_CLC"/>
    <property type="match status" value="1"/>
</dbReference>
<dbReference type="PRINTS" id="PR00762">
    <property type="entry name" value="CLCHANNEL"/>
</dbReference>
<dbReference type="SUPFAM" id="SSF81340">
    <property type="entry name" value="Clc chloride channel"/>
    <property type="match status" value="1"/>
</dbReference>
<reference key="1">
    <citation type="journal article" date="2002" name="J. Bacteriol.">
        <title>The superantigen gene ypm is located in an unstable chromosomal locus of Yersinia pseudotuberculosis.</title>
        <authorList>
            <person name="Carnoy C."/>
            <person name="Floquet S."/>
            <person name="Marceau M."/>
            <person name="Sebbane F."/>
            <person name="Haentjens-Herwegh S."/>
            <person name="Devalckenaere A."/>
            <person name="Simonet M."/>
        </authorList>
    </citation>
    <scope>NUCLEOTIDE SEQUENCE [GENOMIC DNA]</scope>
    <source>
        <strain>487/90 / Serotype 6</strain>
        <strain>AH / Serotype 4b</strain>
        <strain>YPT1 / Serotype 3</strain>
    </source>
</reference>
<reference key="2">
    <citation type="journal article" date="2004" name="Proc. Natl. Acad. Sci. U.S.A.">
        <title>Insights into the evolution of Yersinia pestis through whole-genome comparison with Yersinia pseudotuberculosis.</title>
        <authorList>
            <person name="Chain P.S.G."/>
            <person name="Carniel E."/>
            <person name="Larimer F.W."/>
            <person name="Lamerdin J."/>
            <person name="Stoutland P.O."/>
            <person name="Regala W.M."/>
            <person name="Georgescu A.M."/>
            <person name="Vergez L.M."/>
            <person name="Land M.L."/>
            <person name="Motin V.L."/>
            <person name="Brubaker R.R."/>
            <person name="Fowler J."/>
            <person name="Hinnebusch J."/>
            <person name="Marceau M."/>
            <person name="Medigue C."/>
            <person name="Simonet M."/>
            <person name="Chenal-Francisque V."/>
            <person name="Souza B."/>
            <person name="Dacheux D."/>
            <person name="Elliott J.M."/>
            <person name="Derbise A."/>
            <person name="Hauser L.J."/>
            <person name="Garcia E."/>
        </authorList>
    </citation>
    <scope>NUCLEOTIDE SEQUENCE [LARGE SCALE GENOMIC DNA]</scope>
    <source>
        <strain>IP32953</strain>
    </source>
</reference>
<feature type="chain" id="PRO_0000094492" description="Voltage-gated ClC-type chloride channel ClcB">
    <location>
        <begin position="1"/>
        <end position="414"/>
    </location>
</feature>
<feature type="transmembrane region" description="Helical" evidence="1">
    <location>
        <begin position="5"/>
        <end position="25"/>
    </location>
</feature>
<feature type="transmembrane region" description="Helical" evidence="1">
    <location>
        <begin position="54"/>
        <end position="74"/>
    </location>
</feature>
<feature type="transmembrane region" description="Helical" evidence="1">
    <location>
        <begin position="116"/>
        <end position="136"/>
    </location>
</feature>
<feature type="transmembrane region" description="Helical" evidence="1">
    <location>
        <begin position="147"/>
        <end position="167"/>
    </location>
</feature>
<feature type="transmembrane region" description="Helical" evidence="1">
    <location>
        <begin position="169"/>
        <end position="189"/>
    </location>
</feature>
<feature type="transmembrane region" description="Helical" evidence="1">
    <location>
        <begin position="220"/>
        <end position="240"/>
    </location>
</feature>
<feature type="transmembrane region" description="Helical" evidence="1">
    <location>
        <begin position="255"/>
        <end position="275"/>
    </location>
</feature>
<feature type="transmembrane region" description="Helical" evidence="1">
    <location>
        <begin position="292"/>
        <end position="312"/>
    </location>
</feature>
<feature type="transmembrane region" description="Helical" evidence="1">
    <location>
        <begin position="327"/>
        <end position="347"/>
    </location>
</feature>
<feature type="transmembrane region" description="Helical" evidence="1">
    <location>
        <begin position="353"/>
        <end position="373"/>
    </location>
</feature>
<feature type="transmembrane region" description="Helical" evidence="1">
    <location>
        <begin position="381"/>
        <end position="401"/>
    </location>
</feature>
<feature type="sequence variant" description="In strain: 487/90.">
    <original>V</original>
    <variation>L</variation>
    <location>
        <position position="6"/>
    </location>
</feature>
<feature type="sequence variant" description="In strain: 487/90.">
    <original>L</original>
    <variation>S</variation>
    <location>
        <position position="66"/>
    </location>
</feature>
<feature type="sequence variant" description="In strain: 487/90.">
    <original>V</original>
    <variation>I</variation>
    <location>
        <position position="134"/>
    </location>
</feature>
<feature type="sequence variant" description="In strain: 487/90.">
    <original>K</original>
    <variation>N</variation>
    <location>
        <position position="141"/>
    </location>
</feature>
<feature type="sequence variant" description="In strain: 487/90.">
    <original>T</original>
    <variation>P</variation>
    <location>
        <position position="207"/>
    </location>
</feature>
<feature type="sequence variant" description="In strain: 487/90.">
    <original>T</original>
    <variation>A</variation>
    <location>
        <position position="213"/>
    </location>
</feature>
<feature type="sequence variant" description="In strain: 487/90.">
    <original>A</original>
    <variation>S</variation>
    <location>
        <position position="242"/>
    </location>
</feature>
<feature type="sequence variant" description="In strain: 487/90.">
    <original>L</original>
    <variation>S</variation>
    <location>
        <position position="256"/>
    </location>
</feature>
<feature type="sequence variant" description="In strain: 487/90.">
    <original>I</original>
    <variation>V</variation>
    <location>
        <position position="266"/>
    </location>
</feature>
<feature type="sequence variant" description="In strain: 487/90.">
    <original>I</original>
    <variation>V</variation>
    <location>
        <position position="304"/>
    </location>
</feature>
<feature type="sequence variant" description="In strain: 487/90.">
    <original>S</original>
    <variation>A</variation>
    <location>
        <position position="342"/>
    </location>
</feature>
<feature type="sequence variant" description="In strain: 487/90.">
    <original>R</original>
    <variation>H</variation>
    <location>
        <position position="406"/>
    </location>
</feature>
<accession>Q9AGD5</accession>
<accession>Q66AD8</accession>
<accession>Q93AN9</accession>
<comment type="function">
    <text evidence="1">Probably acts as an electrical shunt for an outwardly-directed proton pump that is linked to amino acid decarboxylation, as part of the extreme acid resistance (XAR) response.</text>
</comment>
<comment type="subcellular location">
    <subcellularLocation>
        <location evidence="1">Cell inner membrane</location>
        <topology evidence="1">Multi-pass membrane protein</topology>
    </subcellularLocation>
</comment>
<comment type="similarity">
    <text evidence="1">Belongs to the chloride channel (TC 2.A.49) family. ClcB subfamily.</text>
</comment>
<comment type="sequence caution" evidence="2">
    <conflict type="erroneous initiation">
        <sequence resource="EMBL-CDS" id="AAK28548"/>
    </conflict>
</comment>
<comment type="sequence caution" evidence="2">
    <conflict type="erroneous initiation">
        <sequence resource="EMBL-CDS" id="AAL02238"/>
    </conflict>
</comment>
<comment type="sequence caution" evidence="2">
    <conflict type="erroneous initiation">
        <sequence resource="EMBL-CDS" id="AAL14973"/>
    </conflict>
</comment>
<comment type="sequence caution" evidence="2">
    <conflict type="erroneous initiation">
        <sequence resource="EMBL-CDS" id="CAH21430"/>
    </conflict>
</comment>
<protein>
    <recommendedName>
        <fullName evidence="1">Voltage-gated ClC-type chloride channel ClcB</fullName>
    </recommendedName>
</protein>
<sequence>MLRRLVISIMLGMVSALIVWLFHQAMLGLEWLLFSRTDGSLVAAAASITGWRRALTPALGGLAAGLLLWAYQRYQHRKPSAPTDYMEAIEIGDGRLDVSASLVKSLASLLVVSSGSAIGREGAMVLLAALFASVFAQRYAKPKEWKLWVACGAAAGMASAYHAPLAGSLFIAEILFGTLMLASLGPVVIAAVSALLTTNLLQGGQETLYQVQTLPSPWPVQYFLMALLGLMAGFSGPLFLKAMAASSHAFRSLNLLPPLQLALGGIIVGLLSLIFPEVWGNGYSVVQSLLTTPPGVLLIGGILICKLLAVLASSGSGAPGGVFTPTLFVGAALGMLCGQIFSLWPVLGDNIGLLMALTGMATLLAATTHAPIMAALMVCEMTGEYTLLPGLLLSCVIATTIARWLRPISVYRSH</sequence>
<organism>
    <name type="scientific">Yersinia pseudotuberculosis serotype I (strain IP32953)</name>
    <dbReference type="NCBI Taxonomy" id="273123"/>
    <lineage>
        <taxon>Bacteria</taxon>
        <taxon>Pseudomonadati</taxon>
        <taxon>Pseudomonadota</taxon>
        <taxon>Gammaproteobacteria</taxon>
        <taxon>Enterobacterales</taxon>
        <taxon>Yersiniaceae</taxon>
        <taxon>Yersinia</taxon>
    </lineage>
</organism>
<gene>
    <name evidence="1" type="primary">clcB</name>
    <name type="ordered locus">YPTB2192</name>
</gene>
<name>CLCB_YERPS</name>
<keyword id="KW-0997">Cell inner membrane</keyword>
<keyword id="KW-1003">Cell membrane</keyword>
<keyword id="KW-0868">Chloride</keyword>
<keyword id="KW-0869">Chloride channel</keyword>
<keyword id="KW-0407">Ion channel</keyword>
<keyword id="KW-0406">Ion transport</keyword>
<keyword id="KW-0472">Membrane</keyword>
<keyword id="KW-0812">Transmembrane</keyword>
<keyword id="KW-1133">Transmembrane helix</keyword>
<keyword id="KW-0813">Transport</keyword>
<keyword id="KW-0851">Voltage-gated channel</keyword>
<evidence type="ECO:0000255" key="1">
    <source>
        <dbReference type="HAMAP-Rule" id="MF_01203"/>
    </source>
</evidence>
<evidence type="ECO:0000305" key="2"/>
<proteinExistence type="inferred from homology"/>